<name>IF3_ECO57</name>
<comment type="function">
    <text evidence="1">IF-3 binds to the 30S ribosomal subunit and shifts the equilibrium between 70S ribosomes and their 50S and 30S subunits in favor of the free subunits, thus enhancing the availability of 30S subunits on which protein synthesis initiation begins.</text>
</comment>
<comment type="subunit">
    <text evidence="1">Monomer.</text>
</comment>
<comment type="subcellular location">
    <subcellularLocation>
        <location evidence="1">Cytoplasm</location>
    </subcellularLocation>
</comment>
<comment type="similarity">
    <text evidence="1">Belongs to the IF-3 family.</text>
</comment>
<comment type="sequence caution" evidence="2">
    <conflict type="erroneous initiation">
        <sequence resource="EMBL-CDS" id="AAG56705"/>
    </conflict>
</comment>
<reference key="1">
    <citation type="journal article" date="2001" name="Nature">
        <title>Genome sequence of enterohaemorrhagic Escherichia coli O157:H7.</title>
        <authorList>
            <person name="Perna N.T."/>
            <person name="Plunkett G. III"/>
            <person name="Burland V."/>
            <person name="Mau B."/>
            <person name="Glasner J.D."/>
            <person name="Rose D.J."/>
            <person name="Mayhew G.F."/>
            <person name="Evans P.S."/>
            <person name="Gregor J."/>
            <person name="Kirkpatrick H.A."/>
            <person name="Posfai G."/>
            <person name="Hackett J."/>
            <person name="Klink S."/>
            <person name="Boutin A."/>
            <person name="Shao Y."/>
            <person name="Miller L."/>
            <person name="Grotbeck E.J."/>
            <person name="Davis N.W."/>
            <person name="Lim A."/>
            <person name="Dimalanta E.T."/>
            <person name="Potamousis K."/>
            <person name="Apodaca J."/>
            <person name="Anantharaman T.S."/>
            <person name="Lin J."/>
            <person name="Yen G."/>
            <person name="Schwartz D.C."/>
            <person name="Welch R.A."/>
            <person name="Blattner F.R."/>
        </authorList>
    </citation>
    <scope>NUCLEOTIDE SEQUENCE [LARGE SCALE GENOMIC DNA]</scope>
    <source>
        <strain>O157:H7 / EDL933 / ATCC 700927 / EHEC</strain>
    </source>
</reference>
<reference key="2">
    <citation type="journal article" date="2001" name="DNA Res.">
        <title>Complete genome sequence of enterohemorrhagic Escherichia coli O157:H7 and genomic comparison with a laboratory strain K-12.</title>
        <authorList>
            <person name="Hayashi T."/>
            <person name="Makino K."/>
            <person name="Ohnishi M."/>
            <person name="Kurokawa K."/>
            <person name="Ishii K."/>
            <person name="Yokoyama K."/>
            <person name="Han C.-G."/>
            <person name="Ohtsubo E."/>
            <person name="Nakayama K."/>
            <person name="Murata T."/>
            <person name="Tanaka M."/>
            <person name="Tobe T."/>
            <person name="Iida T."/>
            <person name="Takami H."/>
            <person name="Honda T."/>
            <person name="Sasakawa C."/>
            <person name="Ogasawara N."/>
            <person name="Yasunaga T."/>
            <person name="Kuhara S."/>
            <person name="Shiba T."/>
            <person name="Hattori M."/>
            <person name="Shinagawa H."/>
        </authorList>
    </citation>
    <scope>NUCLEOTIDE SEQUENCE [LARGE SCALE GENOMIC DNA]</scope>
    <source>
        <strain>O157:H7 / Sakai / RIMD 0509952 / EHEC</strain>
    </source>
</reference>
<evidence type="ECO:0000255" key="1">
    <source>
        <dbReference type="HAMAP-Rule" id="MF_00080"/>
    </source>
</evidence>
<evidence type="ECO:0000305" key="2"/>
<gene>
    <name evidence="1" type="primary">infC</name>
    <name type="ordered locus">Z2747</name>
    <name type="ordered locus">ECs2425</name>
</gene>
<sequence length="180" mass="20564">MKGGKRVQTARPNRINGEIRAQEVRLTGLEGEQLGIVSLREALEKAEEAGVDLVEISPNAEPPVCRIMDYGKFLYEKSKSSKEQKKKQKVIQVKEIKFRPGTDEGDYQVKLRSLIRFLEEGDKAKITLRFRGREMAHQQIGMEVLNRVKDDLQELAVVESFPTKIEGRQMIMVLAPKKKQ</sequence>
<dbReference type="EMBL" id="AE005174">
    <property type="protein sequence ID" value="AAG56705.1"/>
    <property type="status" value="ALT_INIT"/>
    <property type="molecule type" value="Genomic_DNA"/>
</dbReference>
<dbReference type="EMBL" id="BA000007">
    <property type="protein sequence ID" value="BAB35848.1"/>
    <property type="molecule type" value="Genomic_DNA"/>
</dbReference>
<dbReference type="PIR" id="A90932">
    <property type="entry name" value="A90932"/>
</dbReference>
<dbReference type="RefSeq" id="NP_310452.1">
    <property type="nucleotide sequence ID" value="NC_002695.1"/>
</dbReference>
<dbReference type="RefSeq" id="WP_001700733.1">
    <property type="nucleotide sequence ID" value="NZ_VOAI01000007.1"/>
</dbReference>
<dbReference type="SMR" id="P0A709"/>
<dbReference type="STRING" id="155864.Z2747"/>
<dbReference type="GeneID" id="913250"/>
<dbReference type="GeneID" id="93775931"/>
<dbReference type="KEGG" id="ece:Z2747"/>
<dbReference type="KEGG" id="ecs:ECs_2425"/>
<dbReference type="PATRIC" id="fig|386585.9.peg.2538"/>
<dbReference type="eggNOG" id="COG0290">
    <property type="taxonomic scope" value="Bacteria"/>
</dbReference>
<dbReference type="HOGENOM" id="CLU_054919_3_2_6"/>
<dbReference type="OMA" id="KCTVIFR"/>
<dbReference type="Proteomes" id="UP000000558">
    <property type="component" value="Chromosome"/>
</dbReference>
<dbReference type="Proteomes" id="UP000002519">
    <property type="component" value="Chromosome"/>
</dbReference>
<dbReference type="GO" id="GO:0005829">
    <property type="term" value="C:cytosol"/>
    <property type="evidence" value="ECO:0007669"/>
    <property type="project" value="TreeGrafter"/>
</dbReference>
<dbReference type="GO" id="GO:0016020">
    <property type="term" value="C:membrane"/>
    <property type="evidence" value="ECO:0007669"/>
    <property type="project" value="TreeGrafter"/>
</dbReference>
<dbReference type="GO" id="GO:0043022">
    <property type="term" value="F:ribosome binding"/>
    <property type="evidence" value="ECO:0007669"/>
    <property type="project" value="TreeGrafter"/>
</dbReference>
<dbReference type="GO" id="GO:0003743">
    <property type="term" value="F:translation initiation factor activity"/>
    <property type="evidence" value="ECO:0007669"/>
    <property type="project" value="UniProtKB-UniRule"/>
</dbReference>
<dbReference type="GO" id="GO:0032790">
    <property type="term" value="P:ribosome disassembly"/>
    <property type="evidence" value="ECO:0007669"/>
    <property type="project" value="TreeGrafter"/>
</dbReference>
<dbReference type="FunFam" id="3.10.20.80:FF:000001">
    <property type="entry name" value="Translation initiation factor IF-3"/>
    <property type="match status" value="1"/>
</dbReference>
<dbReference type="FunFam" id="3.30.110.10:FF:000001">
    <property type="entry name" value="Translation initiation factor IF-3"/>
    <property type="match status" value="1"/>
</dbReference>
<dbReference type="Gene3D" id="3.30.110.10">
    <property type="entry name" value="Translation initiation factor 3 (IF-3), C-terminal domain"/>
    <property type="match status" value="1"/>
</dbReference>
<dbReference type="Gene3D" id="3.10.20.80">
    <property type="entry name" value="Translation initiation factor 3 (IF-3), N-terminal domain"/>
    <property type="match status" value="1"/>
</dbReference>
<dbReference type="HAMAP" id="MF_00080">
    <property type="entry name" value="IF_3"/>
    <property type="match status" value="1"/>
</dbReference>
<dbReference type="InterPro" id="IPR036788">
    <property type="entry name" value="T_IF-3_C_sf"/>
</dbReference>
<dbReference type="InterPro" id="IPR036787">
    <property type="entry name" value="T_IF-3_N_sf"/>
</dbReference>
<dbReference type="InterPro" id="IPR019813">
    <property type="entry name" value="Translation_initiation_fac3_CS"/>
</dbReference>
<dbReference type="InterPro" id="IPR001288">
    <property type="entry name" value="Translation_initiation_fac_3"/>
</dbReference>
<dbReference type="InterPro" id="IPR019815">
    <property type="entry name" value="Translation_initiation_fac_3_C"/>
</dbReference>
<dbReference type="InterPro" id="IPR019814">
    <property type="entry name" value="Translation_initiation_fac_3_N"/>
</dbReference>
<dbReference type="NCBIfam" id="TIGR00168">
    <property type="entry name" value="infC"/>
    <property type="match status" value="1"/>
</dbReference>
<dbReference type="PANTHER" id="PTHR10938">
    <property type="entry name" value="TRANSLATION INITIATION FACTOR IF-3"/>
    <property type="match status" value="1"/>
</dbReference>
<dbReference type="PANTHER" id="PTHR10938:SF0">
    <property type="entry name" value="TRANSLATION INITIATION FACTOR IF-3, MITOCHONDRIAL"/>
    <property type="match status" value="1"/>
</dbReference>
<dbReference type="Pfam" id="PF00707">
    <property type="entry name" value="IF3_C"/>
    <property type="match status" value="1"/>
</dbReference>
<dbReference type="Pfam" id="PF05198">
    <property type="entry name" value="IF3_N"/>
    <property type="match status" value="1"/>
</dbReference>
<dbReference type="SUPFAM" id="SSF55200">
    <property type="entry name" value="Translation initiation factor IF3, C-terminal domain"/>
    <property type="match status" value="1"/>
</dbReference>
<dbReference type="SUPFAM" id="SSF54364">
    <property type="entry name" value="Translation initiation factor IF3, N-terminal domain"/>
    <property type="match status" value="1"/>
</dbReference>
<dbReference type="PROSITE" id="PS00938">
    <property type="entry name" value="IF3"/>
    <property type="match status" value="1"/>
</dbReference>
<organism>
    <name type="scientific">Escherichia coli O157:H7</name>
    <dbReference type="NCBI Taxonomy" id="83334"/>
    <lineage>
        <taxon>Bacteria</taxon>
        <taxon>Pseudomonadati</taxon>
        <taxon>Pseudomonadota</taxon>
        <taxon>Gammaproteobacteria</taxon>
        <taxon>Enterobacterales</taxon>
        <taxon>Enterobacteriaceae</taxon>
        <taxon>Escherichia</taxon>
    </lineage>
</organism>
<proteinExistence type="inferred from homology"/>
<accession>P0A709</accession>
<accession>P02999</accession>
<accession>P76905</accession>
<protein>
    <recommendedName>
        <fullName evidence="1">Translation initiation factor IF-3</fullName>
    </recommendedName>
</protein>
<keyword id="KW-0963">Cytoplasm</keyword>
<keyword id="KW-0396">Initiation factor</keyword>
<keyword id="KW-0648">Protein biosynthesis</keyword>
<keyword id="KW-1185">Reference proteome</keyword>
<feature type="chain" id="PRO_0000177517" description="Translation initiation factor IF-3">
    <location>
        <begin position="1"/>
        <end position="180"/>
    </location>
</feature>
<feature type="sequence conflict" description="In Ref. 1." evidence="2" ref="1">
    <original>M</original>
    <variation>I</variation>
    <location>
        <position position="1"/>
    </location>
</feature>